<comment type="function">
    <text evidence="1">Binds the lower part of the 30S subunit head. Binds mRNA in the 70S ribosome, positioning it for translation.</text>
</comment>
<comment type="subunit">
    <text evidence="1">Part of the 30S ribosomal subunit. Forms a tight complex with proteins S10 and S14.</text>
</comment>
<comment type="similarity">
    <text evidence="1">Belongs to the universal ribosomal protein uS3 family.</text>
</comment>
<keyword id="KW-0687">Ribonucleoprotein</keyword>
<keyword id="KW-0689">Ribosomal protein</keyword>
<keyword id="KW-0694">RNA-binding</keyword>
<keyword id="KW-0699">rRNA-binding</keyword>
<reference key="1">
    <citation type="journal article" date="2007" name="Proc. Natl. Acad. Sci. U.S.A.">
        <title>Genome and proteome of long-chain alkane degrading Geobacillus thermodenitrificans NG80-2 isolated from a deep-subsurface oil reservoir.</title>
        <authorList>
            <person name="Feng L."/>
            <person name="Wang W."/>
            <person name="Cheng J."/>
            <person name="Ren Y."/>
            <person name="Zhao G."/>
            <person name="Gao C."/>
            <person name="Tang Y."/>
            <person name="Liu X."/>
            <person name="Han W."/>
            <person name="Peng X."/>
            <person name="Liu R."/>
            <person name="Wang L."/>
        </authorList>
    </citation>
    <scope>NUCLEOTIDE SEQUENCE [LARGE SCALE GENOMIC DNA]</scope>
    <source>
        <strain>NG80-2</strain>
    </source>
</reference>
<proteinExistence type="inferred from homology"/>
<gene>
    <name evidence="1" type="primary">rpsC</name>
    <name type="ordered locus">GTNG_0112</name>
</gene>
<name>RS3_GEOTN</name>
<organism>
    <name type="scientific">Geobacillus thermodenitrificans (strain NG80-2)</name>
    <dbReference type="NCBI Taxonomy" id="420246"/>
    <lineage>
        <taxon>Bacteria</taxon>
        <taxon>Bacillati</taxon>
        <taxon>Bacillota</taxon>
        <taxon>Bacilli</taxon>
        <taxon>Bacillales</taxon>
        <taxon>Anoxybacillaceae</taxon>
        <taxon>Geobacillus</taxon>
    </lineage>
</organism>
<protein>
    <recommendedName>
        <fullName evidence="1">Small ribosomal subunit protein uS3</fullName>
    </recommendedName>
    <alternativeName>
        <fullName evidence="2">30S ribosomal protein S3</fullName>
    </alternativeName>
</protein>
<feature type="chain" id="PRO_0000293796" description="Small ribosomal subunit protein uS3">
    <location>
        <begin position="1"/>
        <end position="218"/>
    </location>
</feature>
<feature type="domain" description="KH type-2" evidence="1">
    <location>
        <begin position="38"/>
        <end position="106"/>
    </location>
</feature>
<dbReference type="EMBL" id="CP000557">
    <property type="protein sequence ID" value="ABO65499.1"/>
    <property type="molecule type" value="Genomic_DNA"/>
</dbReference>
<dbReference type="RefSeq" id="WP_008881938.1">
    <property type="nucleotide sequence ID" value="NC_009328.1"/>
</dbReference>
<dbReference type="SMR" id="A4IJJ5"/>
<dbReference type="GeneID" id="87622320"/>
<dbReference type="KEGG" id="gtn:GTNG_0112"/>
<dbReference type="eggNOG" id="COG0092">
    <property type="taxonomic scope" value="Bacteria"/>
</dbReference>
<dbReference type="HOGENOM" id="CLU_058591_0_2_9"/>
<dbReference type="Proteomes" id="UP000001578">
    <property type="component" value="Chromosome"/>
</dbReference>
<dbReference type="GO" id="GO:0022627">
    <property type="term" value="C:cytosolic small ribosomal subunit"/>
    <property type="evidence" value="ECO:0007669"/>
    <property type="project" value="TreeGrafter"/>
</dbReference>
<dbReference type="GO" id="GO:0003729">
    <property type="term" value="F:mRNA binding"/>
    <property type="evidence" value="ECO:0007669"/>
    <property type="project" value="UniProtKB-UniRule"/>
</dbReference>
<dbReference type="GO" id="GO:0019843">
    <property type="term" value="F:rRNA binding"/>
    <property type="evidence" value="ECO:0007669"/>
    <property type="project" value="UniProtKB-UniRule"/>
</dbReference>
<dbReference type="GO" id="GO:0003735">
    <property type="term" value="F:structural constituent of ribosome"/>
    <property type="evidence" value="ECO:0007669"/>
    <property type="project" value="InterPro"/>
</dbReference>
<dbReference type="GO" id="GO:0006412">
    <property type="term" value="P:translation"/>
    <property type="evidence" value="ECO:0007669"/>
    <property type="project" value="UniProtKB-UniRule"/>
</dbReference>
<dbReference type="CDD" id="cd02412">
    <property type="entry name" value="KH-II_30S_S3"/>
    <property type="match status" value="1"/>
</dbReference>
<dbReference type="FunFam" id="3.30.1140.32:FF:000001">
    <property type="entry name" value="30S ribosomal protein S3"/>
    <property type="match status" value="1"/>
</dbReference>
<dbReference type="FunFam" id="3.30.300.20:FF:000001">
    <property type="entry name" value="30S ribosomal protein S3"/>
    <property type="match status" value="1"/>
</dbReference>
<dbReference type="Gene3D" id="3.30.300.20">
    <property type="match status" value="1"/>
</dbReference>
<dbReference type="Gene3D" id="3.30.1140.32">
    <property type="entry name" value="Ribosomal protein S3, C-terminal domain"/>
    <property type="match status" value="1"/>
</dbReference>
<dbReference type="HAMAP" id="MF_01309_B">
    <property type="entry name" value="Ribosomal_uS3_B"/>
    <property type="match status" value="1"/>
</dbReference>
<dbReference type="InterPro" id="IPR004087">
    <property type="entry name" value="KH_dom"/>
</dbReference>
<dbReference type="InterPro" id="IPR015946">
    <property type="entry name" value="KH_dom-like_a/b"/>
</dbReference>
<dbReference type="InterPro" id="IPR004044">
    <property type="entry name" value="KH_dom_type_2"/>
</dbReference>
<dbReference type="InterPro" id="IPR009019">
    <property type="entry name" value="KH_sf_prok-type"/>
</dbReference>
<dbReference type="InterPro" id="IPR036419">
    <property type="entry name" value="Ribosomal_S3_C_sf"/>
</dbReference>
<dbReference type="InterPro" id="IPR005704">
    <property type="entry name" value="Ribosomal_uS3_bac-typ"/>
</dbReference>
<dbReference type="InterPro" id="IPR001351">
    <property type="entry name" value="Ribosomal_uS3_C"/>
</dbReference>
<dbReference type="InterPro" id="IPR018280">
    <property type="entry name" value="Ribosomal_uS3_CS"/>
</dbReference>
<dbReference type="NCBIfam" id="TIGR01009">
    <property type="entry name" value="rpsC_bact"/>
    <property type="match status" value="1"/>
</dbReference>
<dbReference type="PANTHER" id="PTHR11760">
    <property type="entry name" value="30S/40S RIBOSOMAL PROTEIN S3"/>
    <property type="match status" value="1"/>
</dbReference>
<dbReference type="PANTHER" id="PTHR11760:SF19">
    <property type="entry name" value="SMALL RIBOSOMAL SUBUNIT PROTEIN US3C"/>
    <property type="match status" value="1"/>
</dbReference>
<dbReference type="Pfam" id="PF07650">
    <property type="entry name" value="KH_2"/>
    <property type="match status" value="1"/>
</dbReference>
<dbReference type="Pfam" id="PF00189">
    <property type="entry name" value="Ribosomal_S3_C"/>
    <property type="match status" value="1"/>
</dbReference>
<dbReference type="SMART" id="SM00322">
    <property type="entry name" value="KH"/>
    <property type="match status" value="1"/>
</dbReference>
<dbReference type="SUPFAM" id="SSF54814">
    <property type="entry name" value="Prokaryotic type KH domain (KH-domain type II)"/>
    <property type="match status" value="1"/>
</dbReference>
<dbReference type="SUPFAM" id="SSF54821">
    <property type="entry name" value="Ribosomal protein S3 C-terminal domain"/>
    <property type="match status" value="1"/>
</dbReference>
<dbReference type="PROSITE" id="PS50823">
    <property type="entry name" value="KH_TYPE_2"/>
    <property type="match status" value="1"/>
</dbReference>
<dbReference type="PROSITE" id="PS00548">
    <property type="entry name" value="RIBOSOMAL_S3"/>
    <property type="match status" value="1"/>
</dbReference>
<accession>A4IJJ5</accession>
<sequence>MGQKVNPIGLRIGIIRDWESRWYAEKDYADLLHEDLKVREYINKRLQDAAVSRVEIERAANRVNVTIHTAKPGMVIGKGGSEVEALRKALAQLTGKRVHINIVEIKKPDLDAKLVAENIARQLENRVSFRRAQKQAIQRAMRAGAKGIKTMVSGRLGGADIARSEHYSEGTVPLHTLRADIDYATAEADTTYGKIGVKVWIYRGEVLPTKKKAEEGGK</sequence>
<evidence type="ECO:0000255" key="1">
    <source>
        <dbReference type="HAMAP-Rule" id="MF_01309"/>
    </source>
</evidence>
<evidence type="ECO:0000305" key="2"/>